<proteinExistence type="evidence at transcript level"/>
<keyword id="KW-0235">DNA replication</keyword>
<keyword id="KW-0539">Nucleus</keyword>
<keyword id="KW-1185">Reference proteome</keyword>
<sequence>MSHEAHNGTKLFKVQFTPDEEVLEHITDKQGVTPQSNTAAQRIVAVKNIIKNDDLHVDEATPESWREQNYVDVLGVDTEDTLQNGPGTGGGDVYSFYTIKRSNKMAQLATEMARTPAKTVSFSVSDNPEEAVSPPANKQTENKTPSKGRKNEFISTTPHRLRKRLSAPSQPSDSESDYSASNSDEELEEKSSAAKTPSKVSQTPGKTPSKKGKKNTASNLVEEYFEAHSSSKVLTSDRTLQRLQTPKLDQETLRKLLDQTPSAFADELHRISKKHEALFYKWMLQLHLGFNIILFGLGSKQSLIEKFRTSLLQDSLHIVINEFFPSITAKSILNSITEEALGHPGAFRSPLDQMDFILQRFKDDPSLELYLLIHNLDSQMLRGEKCQQVLGQLASIPNLHLLASVDHINAPLMWDQSKQSLYNWLWYETTTFGSYIEETSYENSLLVKRSGALALSSLTHVLRSLTPNARGIFRLLAEYQMANKDNPSYTGLSFQDFYQQCREAFLVNSDLTLRAQLTEFRDHKLIRTKKGMDGVEYLLIPLDLGTLTDFLEMEDKDT</sequence>
<reference key="1">
    <citation type="journal article" date="1996" name="Nature">
        <title>Role for a Xenopus Orc2-related protein in controlling DNA replication.</title>
        <authorList>
            <person name="Carpenter P.B."/>
            <person name="Mueller P.R."/>
            <person name="Dunphy W.G."/>
        </authorList>
    </citation>
    <scope>NUCLEOTIDE SEQUENCE [MRNA]</scope>
    <source>
        <tissue>Oocyte</tissue>
    </source>
</reference>
<name>ORC2_XENLA</name>
<evidence type="ECO:0000250" key="1"/>
<evidence type="ECO:0000256" key="2">
    <source>
        <dbReference type="SAM" id="MobiDB-lite"/>
    </source>
</evidence>
<evidence type="ECO:0000305" key="3"/>
<gene>
    <name type="primary">orc2</name>
    <name type="synonym">orc2l</name>
</gene>
<protein>
    <recommendedName>
        <fullName>Origin recognition complex subunit 2</fullName>
        <shortName>xORC2</shortName>
    </recommendedName>
</protein>
<organism>
    <name type="scientific">Xenopus laevis</name>
    <name type="common">African clawed frog</name>
    <dbReference type="NCBI Taxonomy" id="8355"/>
    <lineage>
        <taxon>Eukaryota</taxon>
        <taxon>Metazoa</taxon>
        <taxon>Chordata</taxon>
        <taxon>Craniata</taxon>
        <taxon>Vertebrata</taxon>
        <taxon>Euteleostomi</taxon>
        <taxon>Amphibia</taxon>
        <taxon>Batrachia</taxon>
        <taxon>Anura</taxon>
        <taxon>Pipoidea</taxon>
        <taxon>Pipidae</taxon>
        <taxon>Xenopodinae</taxon>
        <taxon>Xenopus</taxon>
        <taxon>Xenopus</taxon>
    </lineage>
</organism>
<comment type="function">
    <text>Component of the origin recognition complex (ORC) that binds origins of replication. DNA-binding is ATP-dependent, however specific DNA sequences that define origins of replication have not been identified so far. ORC is required to assemble the pre-replication complex necessary to initiate DNA replication.</text>
</comment>
<comment type="subunit">
    <text evidence="1">ORC is composed of six subunits.</text>
</comment>
<comment type="subcellular location">
    <subcellularLocation>
        <location>Nucleus</location>
    </subcellularLocation>
</comment>
<comment type="similarity">
    <text evidence="3">Belongs to the ORC2 family.</text>
</comment>
<accession>Q91628</accession>
<feature type="chain" id="PRO_0000127077" description="Origin recognition complex subunit 2">
    <location>
        <begin position="1"/>
        <end position="558"/>
    </location>
</feature>
<feature type="region of interest" description="Disordered" evidence="2">
    <location>
        <begin position="119"/>
        <end position="216"/>
    </location>
</feature>
<feature type="compositionally biased region" description="Polar residues" evidence="2">
    <location>
        <begin position="136"/>
        <end position="145"/>
    </location>
</feature>
<feature type="compositionally biased region" description="Low complexity" evidence="2">
    <location>
        <begin position="169"/>
        <end position="182"/>
    </location>
</feature>
<feature type="compositionally biased region" description="Polar residues" evidence="2">
    <location>
        <begin position="193"/>
        <end position="202"/>
    </location>
</feature>
<dbReference type="EMBL" id="U31984">
    <property type="protein sequence ID" value="AAA96391.1"/>
    <property type="molecule type" value="mRNA"/>
</dbReference>
<dbReference type="PIR" id="S68447">
    <property type="entry name" value="S68447"/>
</dbReference>
<dbReference type="SMR" id="Q91628"/>
<dbReference type="IntAct" id="Q91628">
    <property type="interactions" value="1"/>
</dbReference>
<dbReference type="AGR" id="Xenbase:XB-GENE-988555"/>
<dbReference type="Xenbase" id="XB-GENE-988555">
    <property type="gene designation" value="orc2.S"/>
</dbReference>
<dbReference type="Proteomes" id="UP000186698">
    <property type="component" value="Unplaced"/>
</dbReference>
<dbReference type="GO" id="GO:0005664">
    <property type="term" value="C:nuclear origin of replication recognition complex"/>
    <property type="evidence" value="ECO:0000318"/>
    <property type="project" value="GO_Central"/>
</dbReference>
<dbReference type="GO" id="GO:0003682">
    <property type="term" value="F:chromatin binding"/>
    <property type="evidence" value="ECO:0000314"/>
    <property type="project" value="CAFA"/>
</dbReference>
<dbReference type="GO" id="GO:0003688">
    <property type="term" value="F:DNA replication origin binding"/>
    <property type="evidence" value="ECO:0000318"/>
    <property type="project" value="GO_Central"/>
</dbReference>
<dbReference type="GO" id="GO:0006260">
    <property type="term" value="P:DNA replication"/>
    <property type="evidence" value="ECO:0007669"/>
    <property type="project" value="UniProtKB-KW"/>
</dbReference>
<dbReference type="InterPro" id="IPR007220">
    <property type="entry name" value="ORC2"/>
</dbReference>
<dbReference type="InterPro" id="IPR056772">
    <property type="entry name" value="RecA-like_ORC2"/>
</dbReference>
<dbReference type="InterPro" id="IPR056773">
    <property type="entry name" value="WHD_ORC2"/>
</dbReference>
<dbReference type="PANTHER" id="PTHR14052">
    <property type="entry name" value="ORIGIN RECOGNITION COMPLEX SUBUNIT 2"/>
    <property type="match status" value="1"/>
</dbReference>
<dbReference type="PANTHER" id="PTHR14052:SF0">
    <property type="entry name" value="ORIGIN RECOGNITION COMPLEX SUBUNIT 2"/>
    <property type="match status" value="1"/>
</dbReference>
<dbReference type="Pfam" id="PF04084">
    <property type="entry name" value="RecA-like_ORC2"/>
    <property type="match status" value="1"/>
</dbReference>
<dbReference type="Pfam" id="PF24882">
    <property type="entry name" value="WHD_ORC2"/>
    <property type="match status" value="1"/>
</dbReference>